<proteinExistence type="inferred from homology"/>
<comment type="function">
    <text>The aminoglycoside phosphotransferases achieve inactivation of their antibiotic substrates by phosphorylation.</text>
</comment>
<comment type="catalytic activity">
    <reaction>
        <text>streptomycin + ATP = streptomycin 6-phosphate + ADP + H(+)</text>
        <dbReference type="Rhea" id="RHEA:22268"/>
        <dbReference type="ChEBI" id="CHEBI:15378"/>
        <dbReference type="ChEBI" id="CHEBI:30616"/>
        <dbReference type="ChEBI" id="CHEBI:57787"/>
        <dbReference type="ChEBI" id="CHEBI:58007"/>
        <dbReference type="ChEBI" id="CHEBI:456216"/>
        <dbReference type="EC" id="2.7.1.72"/>
    </reaction>
</comment>
<comment type="similarity">
    <text evidence="2">Belongs to the aminoglycoside phosphotransferase family.</text>
</comment>
<keyword id="KW-0046">Antibiotic resistance</keyword>
<keyword id="KW-0067">ATP-binding</keyword>
<keyword id="KW-0418">Kinase</keyword>
<keyword id="KW-0547">Nucleotide-binding</keyword>
<keyword id="KW-0808">Transferase</keyword>
<sequence>MSSSDHIHVPDGLAESYSRSGGEEGRAWIAGLPALVARCVDRWELKRDGGVRSGEASLVVPVLRADGTRAALKLQMPREETTAALIGLRAWGGDGMVRLLDHDEESSTMLLERLDGSRTLASVEDDDEAMGVLAGLLNRLHSVPAPPGLRGLGEIAGAMVEEVPSAVDSLADPEDRSRLRGWASAVAELVGEPGDRVLHWDLHYENVLAAEREPWLAIDPEPLVGDPGFDLWPALDTGWERIEATGDARRVVRRRFDLLTESLELDRGRAAGWTLARLLQNTLWDIEDGLTAIAPSQIAVAEALAKP</sequence>
<gene>
    <name type="primary">aphD</name>
    <name type="synonym">sph</name>
    <name type="synonym">strA</name>
</gene>
<name>STRA_STRGR</name>
<reference key="1">
    <citation type="journal article" date="1987" name="Nucleic Acids Res.">
        <title>Gene cluster for streptomycin biosynthesis in Streptomyces griseus: nucleotide sequence of three genes and analysis of transcriptional activity.</title>
        <authorList>
            <person name="Distler J."/>
            <person name="Ebert A."/>
            <person name="Mansouri K."/>
            <person name="Pissowotzki K."/>
            <person name="Stockmann M."/>
            <person name="Piepersberg W."/>
        </authorList>
    </citation>
    <scope>NUCLEOTIDE SEQUENCE [GENOMIC DNA]</scope>
    <source>
        <strain>N2-3-11</strain>
    </source>
</reference>
<reference key="2">
    <citation type="journal article" date="1987" name="Nucleic Acids Res.">
        <title>Nucleotide sequence of the streptomycinphosphotransferase and amidinotransferase genes from Streptomyces griseus.</title>
        <authorList>
            <person name="Tohyama H."/>
            <person name="Okami Y."/>
            <person name="Umezawa H."/>
        </authorList>
    </citation>
    <scope>NUCLEOTIDE SEQUENCE [GENOMIC DNA]</scope>
    <source>
        <strain>ATCC 23345 / DSM 40236 / JCM 4644 / NBRC 12875 / NCIMB 13023 / NRRL B-2682 / VKM Ac-800 / IMRU 3463</strain>
    </source>
</reference>
<reference key="3">
    <citation type="journal article" date="1987" name="Mol. Gen. Genet.">
        <title>Gene cluster for streptomycin biosynthesis in Streptomyces griseus: analysis of a central region including the major resistance gene.</title>
        <authorList>
            <person name="Distler J."/>
            <person name="Braun C."/>
            <person name="Ebert A."/>
            <person name="Piepersberg W."/>
        </authorList>
    </citation>
    <scope>NUCLEOTIDE SEQUENCE [GENOMIC DNA]</scope>
</reference>
<protein>
    <recommendedName>
        <fullName>Streptomycin 6-kinase</fullName>
        <ecNumber>2.7.1.72</ecNumber>
    </recommendedName>
    <alternativeName>
        <fullName>APH(6)</fullName>
    </alternativeName>
    <alternativeName>
        <fullName>Streptidine kinase</fullName>
    </alternativeName>
    <alternativeName>
        <fullName>Streptomycin 6-phosphotransferase</fullName>
    </alternativeName>
</protein>
<feature type="chain" id="PRO_0000204815" description="Streptomycin 6-kinase">
    <location>
        <begin position="1"/>
        <end position="307"/>
    </location>
</feature>
<feature type="active site" description="Proton acceptor" evidence="1">
    <location>
        <position position="201"/>
    </location>
</feature>
<feature type="binding site" evidence="1">
    <location>
        <begin position="133"/>
        <end position="145"/>
    </location>
    <ligand>
        <name>streptomycin</name>
        <dbReference type="ChEBI" id="CHEBI:58007"/>
    </ligand>
</feature>
<feature type="sequence variant" description="In strain: ISP 5236.">
    <original>ALVARC</original>
    <variation>GSRRAI</variation>
    <location>
        <begin position="34"/>
        <end position="39"/>
    </location>
</feature>
<feature type="sequence variant" description="In strain: ISP 5236.">
    <original>DGSRTL</original>
    <variation>GRFADV</variation>
    <location>
        <begin position="115"/>
        <end position="120"/>
    </location>
</feature>
<feature type="sequence variant" description="In strain: ISP 5236.">
    <original>GWASAVAE</original>
    <variation>AVGVGREP</variation>
    <location>
        <begin position="181"/>
        <end position="188"/>
    </location>
</feature>
<feature type="sequence variant" description="In strain: ISP 5236.">
    <original>G</original>
    <variation>A</variation>
    <location>
        <position position="225"/>
    </location>
</feature>
<feature type="sequence variant" description="In strain: ISP 5236.">
    <original>S</original>
    <variation>A</variation>
    <location>
        <position position="262"/>
    </location>
</feature>
<accession>P08077</accession>
<evidence type="ECO:0000250" key="1"/>
<evidence type="ECO:0000305" key="2"/>
<dbReference type="EC" id="2.7.1.72"/>
<dbReference type="EMBL" id="Y00459">
    <property type="protein sequence ID" value="CAA68516.1"/>
    <property type="molecule type" value="Genomic_DNA"/>
</dbReference>
<dbReference type="EMBL" id="X05045">
    <property type="protein sequence ID" value="CAA28717.1"/>
    <property type="molecule type" value="Genomic_DNA"/>
</dbReference>
<dbReference type="EMBL" id="X05647">
    <property type="protein sequence ID" value="CAA29134.1"/>
    <property type="molecule type" value="Genomic_DNA"/>
</dbReference>
<dbReference type="PIR" id="A26674">
    <property type="entry name" value="A26674"/>
</dbReference>
<dbReference type="PIR" id="S06355">
    <property type="entry name" value="KISM6G"/>
</dbReference>
<dbReference type="RefSeq" id="WP_063842181.1">
    <property type="nucleotide sequence ID" value="NG_047458.1"/>
</dbReference>
<dbReference type="SMR" id="P08077"/>
<dbReference type="CARD" id="ARO:3002657">
    <property type="molecule name" value="APH(6)-Ia"/>
    <property type="mechanism identifier" value="ARO:0001004"/>
    <property type="mechanism name" value="antibiotic inactivation"/>
</dbReference>
<dbReference type="BioCyc" id="MetaCyc:MONOMER-14016"/>
<dbReference type="GO" id="GO:0050300">
    <property type="term" value="F:aminoglycoside 6-kinase activity"/>
    <property type="evidence" value="ECO:0007669"/>
    <property type="project" value="UniProtKB-EC"/>
</dbReference>
<dbReference type="GO" id="GO:0005524">
    <property type="term" value="F:ATP binding"/>
    <property type="evidence" value="ECO:0007669"/>
    <property type="project" value="UniProtKB-KW"/>
</dbReference>
<dbReference type="GO" id="GO:0046677">
    <property type="term" value="P:response to antibiotic"/>
    <property type="evidence" value="ECO:0007669"/>
    <property type="project" value="UniProtKB-KW"/>
</dbReference>
<dbReference type="GO" id="GO:0019748">
    <property type="term" value="P:secondary metabolic process"/>
    <property type="evidence" value="ECO:0007669"/>
    <property type="project" value="InterPro"/>
</dbReference>
<dbReference type="InterPro" id="IPR011009">
    <property type="entry name" value="Kinase-like_dom_sf"/>
</dbReference>
<dbReference type="InterPro" id="IPR006748">
    <property type="entry name" value="NH2Glyco/OHUrea_AB-resist_kin"/>
</dbReference>
<dbReference type="NCBIfam" id="NF012171">
    <property type="entry name" value="APH_6"/>
    <property type="match status" value="1"/>
</dbReference>
<dbReference type="Pfam" id="PF04655">
    <property type="entry name" value="APH_6_hur"/>
    <property type="match status" value="1"/>
</dbReference>
<dbReference type="SUPFAM" id="SSF56112">
    <property type="entry name" value="Protein kinase-like (PK-like)"/>
    <property type="match status" value="1"/>
</dbReference>
<organism>
    <name type="scientific">Streptomyces griseus</name>
    <dbReference type="NCBI Taxonomy" id="1911"/>
    <lineage>
        <taxon>Bacteria</taxon>
        <taxon>Bacillati</taxon>
        <taxon>Actinomycetota</taxon>
        <taxon>Actinomycetes</taxon>
        <taxon>Kitasatosporales</taxon>
        <taxon>Streptomycetaceae</taxon>
        <taxon>Streptomyces</taxon>
    </lineage>
</organism>